<feature type="chain" id="PRO_0000278325" description="Protein MCM10 homolog">
    <location>
        <begin position="1"/>
        <end position="776"/>
    </location>
</feature>
<feature type="region of interest" description="Disordered" evidence="2">
    <location>
        <begin position="30"/>
        <end position="49"/>
    </location>
</feature>
<feature type="region of interest" description="Zinc finger-like">
    <location>
        <begin position="331"/>
        <end position="356"/>
    </location>
</feature>
<feature type="region of interest" description="Disordered" evidence="2">
    <location>
        <begin position="430"/>
        <end position="468"/>
    </location>
</feature>
<feature type="region of interest" description="Disordered" evidence="2">
    <location>
        <begin position="487"/>
        <end position="521"/>
    </location>
</feature>
<feature type="compositionally biased region" description="Basic and acidic residues" evidence="2">
    <location>
        <begin position="32"/>
        <end position="43"/>
    </location>
</feature>
<feature type="modified residue" description="Phosphoserine" evidence="4">
    <location>
        <position position="87"/>
    </location>
</feature>
<feature type="modified residue" description="Phosphoserine" evidence="4">
    <location>
        <position position="88"/>
    </location>
</feature>
<name>MCM10_DROME</name>
<gene>
    <name type="primary">Mcm10</name>
    <name type="synonym">Scim19</name>
    <name type="ORF">CG9241</name>
</gene>
<sequence length="776" mass="86524">MGPAQKSGTDISIDDEEEILALEKLLGAAENENTKSAESEKAKPTAPILVPKLREDNSFANAFTFEKIVKPEKQKNAAIIKEPELDSSDDEEVKNFLERKYNEYGSDINKRLKQQQENAYESKVAREVDQELKKSIHVVTSTPQPLKNPHNPIKRQSAVSTTFQRPPPVAAAVASTSQSSAPVSAVFTDPVFGLRMINPLVSSSLLQERMTGRKPVPFSGVAYHIERGDLAKDWVIAGALVSKNPVKNTKKGDPYSTWKLSDLRGEVKTISLFLFKEAHKSLWKTAEGLCLAVLNPTIFERRAGSSDVACLSIDSSQKVMILGQSKDLGTCRATKKNGDKCTSVVNLTDCDYCIFHVKQEYGKMSRRSELQSATAGRGINELRNKVLGKNEVFYGGQTFTAVPARKSAKLITKERDRLSMLAGYDVSPFAHTANHTSKPKTAEPTKIPYAERGGPVSRLAGGVEASRKQRVQDLERLRLLKEENERFEKKKQAEGHVLGSDNKKESEAGTPAVSMPTTPVPDKFKNRGFSFDASLTPKLSGSENFSFEINVGSRQAQNAKLKAAALLKKKPLEKINPNSTRGSESGKRRAIDELNEKFSSSAKRQKIDEDDRELMRKSRIEKIMAATSSHTNLVEMREREAQEEYFNKLERKEAMEEKMLTTYKMPCKAVICQVCKYTAFSASDRCKEQKHPLKVVDAEKRFFQCKDCGNRTTTVFKLPKQSCKNCKGSRWQRTAMIREKKILTGRETLSVRGDEETFMGCLAGSANLNLLVPDEE</sequence>
<reference key="1">
    <citation type="journal article" date="2000" name="Science">
        <title>The genome sequence of Drosophila melanogaster.</title>
        <authorList>
            <person name="Adams M.D."/>
            <person name="Celniker S.E."/>
            <person name="Holt R.A."/>
            <person name="Evans C.A."/>
            <person name="Gocayne J.D."/>
            <person name="Amanatides P.G."/>
            <person name="Scherer S.E."/>
            <person name="Li P.W."/>
            <person name="Hoskins R.A."/>
            <person name="Galle R.F."/>
            <person name="George R.A."/>
            <person name="Lewis S.E."/>
            <person name="Richards S."/>
            <person name="Ashburner M."/>
            <person name="Henderson S.N."/>
            <person name="Sutton G.G."/>
            <person name="Wortman J.R."/>
            <person name="Yandell M.D."/>
            <person name="Zhang Q."/>
            <person name="Chen L.X."/>
            <person name="Brandon R.C."/>
            <person name="Rogers Y.-H.C."/>
            <person name="Blazej R.G."/>
            <person name="Champe M."/>
            <person name="Pfeiffer B.D."/>
            <person name="Wan K.H."/>
            <person name="Doyle C."/>
            <person name="Baxter E.G."/>
            <person name="Helt G."/>
            <person name="Nelson C.R."/>
            <person name="Miklos G.L.G."/>
            <person name="Abril J.F."/>
            <person name="Agbayani A."/>
            <person name="An H.-J."/>
            <person name="Andrews-Pfannkoch C."/>
            <person name="Baldwin D."/>
            <person name="Ballew R.M."/>
            <person name="Basu A."/>
            <person name="Baxendale J."/>
            <person name="Bayraktaroglu L."/>
            <person name="Beasley E.M."/>
            <person name="Beeson K.Y."/>
            <person name="Benos P.V."/>
            <person name="Berman B.P."/>
            <person name="Bhandari D."/>
            <person name="Bolshakov S."/>
            <person name="Borkova D."/>
            <person name="Botchan M.R."/>
            <person name="Bouck J."/>
            <person name="Brokstein P."/>
            <person name="Brottier P."/>
            <person name="Burtis K.C."/>
            <person name="Busam D.A."/>
            <person name="Butler H."/>
            <person name="Cadieu E."/>
            <person name="Center A."/>
            <person name="Chandra I."/>
            <person name="Cherry J.M."/>
            <person name="Cawley S."/>
            <person name="Dahlke C."/>
            <person name="Davenport L.B."/>
            <person name="Davies P."/>
            <person name="de Pablos B."/>
            <person name="Delcher A."/>
            <person name="Deng Z."/>
            <person name="Mays A.D."/>
            <person name="Dew I."/>
            <person name="Dietz S.M."/>
            <person name="Dodson K."/>
            <person name="Doup L.E."/>
            <person name="Downes M."/>
            <person name="Dugan-Rocha S."/>
            <person name="Dunkov B.C."/>
            <person name="Dunn P."/>
            <person name="Durbin K.J."/>
            <person name="Evangelista C.C."/>
            <person name="Ferraz C."/>
            <person name="Ferriera S."/>
            <person name="Fleischmann W."/>
            <person name="Fosler C."/>
            <person name="Gabrielian A.E."/>
            <person name="Garg N.S."/>
            <person name="Gelbart W.M."/>
            <person name="Glasser K."/>
            <person name="Glodek A."/>
            <person name="Gong F."/>
            <person name="Gorrell J.H."/>
            <person name="Gu Z."/>
            <person name="Guan P."/>
            <person name="Harris M."/>
            <person name="Harris N.L."/>
            <person name="Harvey D.A."/>
            <person name="Heiman T.J."/>
            <person name="Hernandez J.R."/>
            <person name="Houck J."/>
            <person name="Hostin D."/>
            <person name="Houston K.A."/>
            <person name="Howland T.J."/>
            <person name="Wei M.-H."/>
            <person name="Ibegwam C."/>
            <person name="Jalali M."/>
            <person name="Kalush F."/>
            <person name="Karpen G.H."/>
            <person name="Ke Z."/>
            <person name="Kennison J.A."/>
            <person name="Ketchum K.A."/>
            <person name="Kimmel B.E."/>
            <person name="Kodira C.D."/>
            <person name="Kraft C.L."/>
            <person name="Kravitz S."/>
            <person name="Kulp D."/>
            <person name="Lai Z."/>
            <person name="Lasko P."/>
            <person name="Lei Y."/>
            <person name="Levitsky A.A."/>
            <person name="Li J.H."/>
            <person name="Li Z."/>
            <person name="Liang Y."/>
            <person name="Lin X."/>
            <person name="Liu X."/>
            <person name="Mattei B."/>
            <person name="McIntosh T.C."/>
            <person name="McLeod M.P."/>
            <person name="McPherson D."/>
            <person name="Merkulov G."/>
            <person name="Milshina N.V."/>
            <person name="Mobarry C."/>
            <person name="Morris J."/>
            <person name="Moshrefi A."/>
            <person name="Mount S.M."/>
            <person name="Moy M."/>
            <person name="Murphy B."/>
            <person name="Murphy L."/>
            <person name="Muzny D.M."/>
            <person name="Nelson D.L."/>
            <person name="Nelson D.R."/>
            <person name="Nelson K.A."/>
            <person name="Nixon K."/>
            <person name="Nusskern D.R."/>
            <person name="Pacleb J.M."/>
            <person name="Palazzolo M."/>
            <person name="Pittman G.S."/>
            <person name="Pan S."/>
            <person name="Pollard J."/>
            <person name="Puri V."/>
            <person name="Reese M.G."/>
            <person name="Reinert K."/>
            <person name="Remington K."/>
            <person name="Saunders R.D.C."/>
            <person name="Scheeler F."/>
            <person name="Shen H."/>
            <person name="Shue B.C."/>
            <person name="Siden-Kiamos I."/>
            <person name="Simpson M."/>
            <person name="Skupski M.P."/>
            <person name="Smith T.J."/>
            <person name="Spier E."/>
            <person name="Spradling A.C."/>
            <person name="Stapleton M."/>
            <person name="Strong R."/>
            <person name="Sun E."/>
            <person name="Svirskas R."/>
            <person name="Tector C."/>
            <person name="Turner R."/>
            <person name="Venter E."/>
            <person name="Wang A.H."/>
            <person name="Wang X."/>
            <person name="Wang Z.-Y."/>
            <person name="Wassarman D.A."/>
            <person name="Weinstock G.M."/>
            <person name="Weissenbach J."/>
            <person name="Williams S.M."/>
            <person name="Woodage T."/>
            <person name="Worley K.C."/>
            <person name="Wu D."/>
            <person name="Yang S."/>
            <person name="Yao Q.A."/>
            <person name="Ye J."/>
            <person name="Yeh R.-F."/>
            <person name="Zaveri J.S."/>
            <person name="Zhan M."/>
            <person name="Zhang G."/>
            <person name="Zhao Q."/>
            <person name="Zheng L."/>
            <person name="Zheng X.H."/>
            <person name="Zhong F.N."/>
            <person name="Zhong W."/>
            <person name="Zhou X."/>
            <person name="Zhu S.C."/>
            <person name="Zhu X."/>
            <person name="Smith H.O."/>
            <person name="Gibbs R.A."/>
            <person name="Myers E.W."/>
            <person name="Rubin G.M."/>
            <person name="Venter J.C."/>
        </authorList>
    </citation>
    <scope>NUCLEOTIDE SEQUENCE [LARGE SCALE GENOMIC DNA]</scope>
    <source>
        <strain>Berkeley</strain>
    </source>
</reference>
<reference key="2">
    <citation type="journal article" date="2002" name="Genome Biol.">
        <title>Annotation of the Drosophila melanogaster euchromatic genome: a systematic review.</title>
        <authorList>
            <person name="Misra S."/>
            <person name="Crosby M.A."/>
            <person name="Mungall C.J."/>
            <person name="Matthews B.B."/>
            <person name="Campbell K.S."/>
            <person name="Hradecky P."/>
            <person name="Huang Y."/>
            <person name="Kaminker J.S."/>
            <person name="Millburn G.H."/>
            <person name="Prochnik S.E."/>
            <person name="Smith C.D."/>
            <person name="Tupy J.L."/>
            <person name="Whitfield E.J."/>
            <person name="Bayraktaroglu L."/>
            <person name="Berman B.P."/>
            <person name="Bettencourt B.R."/>
            <person name="Celniker S.E."/>
            <person name="de Grey A.D.N.J."/>
            <person name="Drysdale R.A."/>
            <person name="Harris N.L."/>
            <person name="Richter J."/>
            <person name="Russo S."/>
            <person name="Schroeder A.J."/>
            <person name="Shu S.Q."/>
            <person name="Stapleton M."/>
            <person name="Yamada C."/>
            <person name="Ashburner M."/>
            <person name="Gelbart W.M."/>
            <person name="Rubin G.M."/>
            <person name="Lewis S.E."/>
        </authorList>
    </citation>
    <scope>GENOME REANNOTATION</scope>
    <source>
        <strain>Berkeley</strain>
    </source>
</reference>
<reference key="3">
    <citation type="journal article" date="2002" name="Genome Biol.">
        <title>A Drosophila full-length cDNA resource.</title>
        <authorList>
            <person name="Stapleton M."/>
            <person name="Carlson J.W."/>
            <person name="Brokstein P."/>
            <person name="Yu C."/>
            <person name="Champe M."/>
            <person name="George R.A."/>
            <person name="Guarin H."/>
            <person name="Kronmiller B."/>
            <person name="Pacleb J.M."/>
            <person name="Park S."/>
            <person name="Wan K.H."/>
            <person name="Rubin G.M."/>
            <person name="Celniker S.E."/>
        </authorList>
    </citation>
    <scope>NUCLEOTIDE SEQUENCE [LARGE SCALE MRNA] OF 555-776</scope>
    <source>
        <strain>Berkeley</strain>
        <tissue>Embryo</tissue>
    </source>
</reference>
<reference key="4">
    <citation type="journal article" date="2003" name="Mol. Biol. Cell">
        <title>Drosophila MCM10 interacts with members of the prereplication complex and is required for proper chromosome condensation.</title>
        <authorList>
            <person name="Christensen T.W."/>
            <person name="Tye B.K."/>
        </authorList>
    </citation>
    <scope>FUNCTION</scope>
    <scope>INTERACTION WITH MCM2; DUP; ORC2; CDC45 AND SU(VAR)205</scope>
    <scope>SELF-ASSOCIATION</scope>
</reference>
<reference key="5">
    <citation type="journal article" date="2008" name="J. Proteome Res.">
        <title>Phosphoproteome analysis of Drosophila melanogaster embryos.</title>
        <authorList>
            <person name="Zhai B."/>
            <person name="Villen J."/>
            <person name="Beausoleil S.A."/>
            <person name="Mintseris J."/>
            <person name="Gygi S.P."/>
        </authorList>
    </citation>
    <scope>PHOSPHORYLATION [LARGE SCALE ANALYSIS] AT SER-87 AND SER-88</scope>
    <scope>IDENTIFICATION BY MASS SPECTROMETRY</scope>
    <source>
        <tissue>Embryo</tissue>
    </source>
</reference>
<organism>
    <name type="scientific">Drosophila melanogaster</name>
    <name type="common">Fruit fly</name>
    <dbReference type="NCBI Taxonomy" id="7227"/>
    <lineage>
        <taxon>Eukaryota</taxon>
        <taxon>Metazoa</taxon>
        <taxon>Ecdysozoa</taxon>
        <taxon>Arthropoda</taxon>
        <taxon>Hexapoda</taxon>
        <taxon>Insecta</taxon>
        <taxon>Pterygota</taxon>
        <taxon>Neoptera</taxon>
        <taxon>Endopterygota</taxon>
        <taxon>Diptera</taxon>
        <taxon>Brachycera</taxon>
        <taxon>Muscomorpha</taxon>
        <taxon>Ephydroidea</taxon>
        <taxon>Drosophilidae</taxon>
        <taxon>Drosophila</taxon>
        <taxon>Sophophora</taxon>
    </lineage>
</organism>
<accession>Q9VIE6</accession>
<accession>Q95RC7</accession>
<keyword id="KW-0235">DNA replication</keyword>
<keyword id="KW-0479">Metal-binding</keyword>
<keyword id="KW-0539">Nucleus</keyword>
<keyword id="KW-0597">Phosphoprotein</keyword>
<keyword id="KW-1185">Reference proteome</keyword>
<keyword id="KW-0862">Zinc</keyword>
<keyword id="KW-0863">Zinc-finger</keyword>
<protein>
    <recommendedName>
        <fullName>Protein MCM10 homolog</fullName>
    </recommendedName>
    <alternativeName>
        <fullName>Sensitized chromosome inheritance modifier 19</fullName>
    </alternativeName>
</protein>
<comment type="function">
    <text evidence="3">Proposed to be involved in DNA replication and to participate in the activation of the pre-replication complex (pre-RC). May be involved in chromosome condensation.</text>
</comment>
<comment type="subunit">
    <text evidence="3">Self-associates. Interacts with Mcm2, dup, Orc2, CDC45L and Su(var)205.</text>
</comment>
<comment type="interaction">
    <interactant intactId="EBI-91264">
        <id>Q9VIE6</id>
    </interactant>
    <interactant intactId="EBI-156880">
        <id>O96989</id>
        <label>Cdc45</label>
    </interactant>
    <organismsDiffer>false</organismsDiffer>
    <experiments>2</experiments>
</comment>
<comment type="interaction">
    <interactant intactId="EBI-91264">
        <id>Q9VIE6</id>
    </interactant>
    <interactant intactId="EBI-164632">
        <id>Q7JVY2</id>
        <label>dup</label>
    </interactant>
    <organismsDiffer>false</organismsDiffer>
    <experiments>2</experiments>
</comment>
<comment type="interaction">
    <interactant intactId="EBI-91264">
        <id>Q9VIE6</id>
    </interactant>
    <interactant intactId="EBI-138228">
        <id>P49735</id>
        <label>Mcm2</label>
    </interactant>
    <organismsDiffer>false</organismsDiffer>
    <experiments>2</experiments>
</comment>
<comment type="interaction">
    <interactant intactId="EBI-91264">
        <id>Q9VIE6</id>
    </interactant>
    <interactant intactId="EBI-179453">
        <id>Q24168</id>
        <label>Orc2</label>
    </interactant>
    <organismsDiffer>false</organismsDiffer>
    <experiments>2</experiments>
</comment>
<comment type="interaction">
    <interactant intactId="EBI-91264">
        <id>Q9VIE6</id>
    </interactant>
    <interactant intactId="EBI-155532">
        <id>P05205</id>
        <label>Su(var)205</label>
    </interactant>
    <organismsDiffer>false</organismsDiffer>
    <experiments>2</experiments>
</comment>
<comment type="subcellular location">
    <subcellularLocation>
        <location evidence="1">Nucleus</location>
    </subcellularLocation>
</comment>
<comment type="domain">
    <text evidence="1">The zinc finger-like domain binds a zinc ion and is involved in self-association.</text>
</comment>
<comment type="similarity">
    <text evidence="5">Belongs to the MCM10 family.</text>
</comment>
<comment type="sequence caution" evidence="5">
    <conflict type="erroneous initiation">
        <sequence resource="EMBL-CDS" id="AAL29025"/>
    </conflict>
</comment>
<dbReference type="EMBL" id="AE014134">
    <property type="protein sequence ID" value="AAF53976.2"/>
    <property type="molecule type" value="Genomic_DNA"/>
</dbReference>
<dbReference type="EMBL" id="AY061477">
    <property type="protein sequence ID" value="AAL29025.1"/>
    <property type="status" value="ALT_INIT"/>
    <property type="molecule type" value="mRNA"/>
</dbReference>
<dbReference type="RefSeq" id="NP_610097.2">
    <property type="nucleotide sequence ID" value="NM_136253.4"/>
</dbReference>
<dbReference type="SMR" id="Q9VIE6"/>
<dbReference type="BioGRID" id="61343">
    <property type="interactions" value="13"/>
</dbReference>
<dbReference type="DIP" id="DIP-20713N"/>
<dbReference type="FunCoup" id="Q9VIE6">
    <property type="interactions" value="878"/>
</dbReference>
<dbReference type="IntAct" id="Q9VIE6">
    <property type="interactions" value="12"/>
</dbReference>
<dbReference type="STRING" id="7227.FBpp0081004"/>
<dbReference type="iPTMnet" id="Q9VIE6"/>
<dbReference type="PaxDb" id="7227-FBpp0081004"/>
<dbReference type="DNASU" id="35390"/>
<dbReference type="EnsemblMetazoa" id="FBtr0081475">
    <property type="protein sequence ID" value="FBpp0081004"/>
    <property type="gene ID" value="FBgn0032929"/>
</dbReference>
<dbReference type="GeneID" id="35390"/>
<dbReference type="KEGG" id="dme:Dmel_CG9241"/>
<dbReference type="AGR" id="FB:FBgn0032929"/>
<dbReference type="CTD" id="55388"/>
<dbReference type="FlyBase" id="FBgn0032929">
    <property type="gene designation" value="Mcm10"/>
</dbReference>
<dbReference type="VEuPathDB" id="VectorBase:FBgn0032929"/>
<dbReference type="eggNOG" id="KOG3056">
    <property type="taxonomic scope" value="Eukaryota"/>
</dbReference>
<dbReference type="GeneTree" id="ENSGT00390000007134"/>
<dbReference type="HOGENOM" id="CLU_014680_1_1_1"/>
<dbReference type="InParanoid" id="Q9VIE6"/>
<dbReference type="OMA" id="YKMPCKA"/>
<dbReference type="OrthoDB" id="273123at2759"/>
<dbReference type="PhylomeDB" id="Q9VIE6"/>
<dbReference type="Reactome" id="R-DME-176187">
    <property type="pathway name" value="Activation of ATR in response to replication stress"/>
</dbReference>
<dbReference type="Reactome" id="R-DME-68962">
    <property type="pathway name" value="Activation of the pre-replicative complex"/>
</dbReference>
<dbReference type="SignaLink" id="Q9VIE6"/>
<dbReference type="BioGRID-ORCS" id="35390">
    <property type="hits" value="0 hits in 1 CRISPR screen"/>
</dbReference>
<dbReference type="GenomeRNAi" id="35390"/>
<dbReference type="PRO" id="PR:Q9VIE6"/>
<dbReference type="Proteomes" id="UP000000803">
    <property type="component" value="Chromosome 2L"/>
</dbReference>
<dbReference type="Bgee" id="FBgn0032929">
    <property type="expression patterns" value="Expressed in egg cell and 24 other cell types or tissues"/>
</dbReference>
<dbReference type="ExpressionAtlas" id="Q9VIE6">
    <property type="expression patterns" value="baseline and differential"/>
</dbReference>
<dbReference type="GO" id="GO:0043596">
    <property type="term" value="C:nuclear replication fork"/>
    <property type="evidence" value="ECO:0000318"/>
    <property type="project" value="GO_Central"/>
</dbReference>
<dbReference type="GO" id="GO:0005634">
    <property type="term" value="C:nucleus"/>
    <property type="evidence" value="ECO:0000314"/>
    <property type="project" value="FlyBase"/>
</dbReference>
<dbReference type="GO" id="GO:0003688">
    <property type="term" value="F:DNA replication origin binding"/>
    <property type="evidence" value="ECO:0000318"/>
    <property type="project" value="GO_Central"/>
</dbReference>
<dbReference type="GO" id="GO:0003697">
    <property type="term" value="F:single-stranded DNA binding"/>
    <property type="evidence" value="ECO:0000318"/>
    <property type="project" value="GO_Central"/>
</dbReference>
<dbReference type="GO" id="GO:0008270">
    <property type="term" value="F:zinc ion binding"/>
    <property type="evidence" value="ECO:0007669"/>
    <property type="project" value="UniProtKB-KW"/>
</dbReference>
<dbReference type="GO" id="GO:0030261">
    <property type="term" value="P:chromosome condensation"/>
    <property type="evidence" value="ECO:0000315"/>
    <property type="project" value="FlyBase"/>
</dbReference>
<dbReference type="GO" id="GO:0042023">
    <property type="term" value="P:DNA endoreduplication"/>
    <property type="evidence" value="ECO:0000315"/>
    <property type="project" value="FlyBase"/>
</dbReference>
<dbReference type="GO" id="GO:0006260">
    <property type="term" value="P:DNA replication"/>
    <property type="evidence" value="ECO:0000315"/>
    <property type="project" value="FlyBase"/>
</dbReference>
<dbReference type="GO" id="GO:0006270">
    <property type="term" value="P:DNA replication initiation"/>
    <property type="evidence" value="ECO:0000318"/>
    <property type="project" value="GO_Central"/>
</dbReference>
<dbReference type="GO" id="GO:0035214">
    <property type="term" value="P:eye-antennal disc development"/>
    <property type="evidence" value="ECO:0000315"/>
    <property type="project" value="FlyBase"/>
</dbReference>
<dbReference type="GO" id="GO:1901693">
    <property type="term" value="P:negative regulation of compound eye retinal cell apoptotic process"/>
    <property type="evidence" value="ECO:0000315"/>
    <property type="project" value="FlyBase"/>
</dbReference>
<dbReference type="GO" id="GO:0045931">
    <property type="term" value="P:positive regulation of mitotic cell cycle"/>
    <property type="evidence" value="ECO:0000315"/>
    <property type="project" value="FlyBase"/>
</dbReference>
<dbReference type="GO" id="GO:0045678">
    <property type="term" value="P:positive regulation of R7 cell differentiation"/>
    <property type="evidence" value="ECO:0000315"/>
    <property type="project" value="FlyBase"/>
</dbReference>
<dbReference type="FunFam" id="2.40.50.140:FF:000174">
    <property type="entry name" value="DNA replication licensing factor mcm10"/>
    <property type="match status" value="1"/>
</dbReference>
<dbReference type="Gene3D" id="2.40.50.140">
    <property type="entry name" value="Nucleic acid-binding proteins"/>
    <property type="match status" value="1"/>
</dbReference>
<dbReference type="InterPro" id="IPR040184">
    <property type="entry name" value="Mcm10"/>
</dbReference>
<dbReference type="InterPro" id="IPR055065">
    <property type="entry name" value="MCM10_OB"/>
</dbReference>
<dbReference type="InterPro" id="IPR012340">
    <property type="entry name" value="NA-bd_OB-fold"/>
</dbReference>
<dbReference type="InterPro" id="IPR015411">
    <property type="entry name" value="Rep_factor_Mcm10_C"/>
</dbReference>
<dbReference type="InterPro" id="IPR015408">
    <property type="entry name" value="Znf_Mcm10/DnaG"/>
</dbReference>
<dbReference type="InterPro" id="IPR056791">
    <property type="entry name" value="Znf_Mcm10_C"/>
</dbReference>
<dbReference type="PANTHER" id="PTHR13454">
    <property type="entry name" value="PROTEIN MCM10 HOMOLOG"/>
    <property type="match status" value="1"/>
</dbReference>
<dbReference type="PANTHER" id="PTHR13454:SF11">
    <property type="entry name" value="PROTEIN MCM10 HOMOLOG"/>
    <property type="match status" value="1"/>
</dbReference>
<dbReference type="Pfam" id="PF09332">
    <property type="entry name" value="Mcm10"/>
    <property type="match status" value="1"/>
</dbReference>
<dbReference type="Pfam" id="PF22379">
    <property type="entry name" value="MCM10_OB"/>
    <property type="match status" value="1"/>
</dbReference>
<dbReference type="Pfam" id="PF24863">
    <property type="entry name" value="zf-CCCH_Mcm10"/>
    <property type="match status" value="1"/>
</dbReference>
<dbReference type="Pfam" id="PF09329">
    <property type="entry name" value="zf-primase"/>
    <property type="match status" value="1"/>
</dbReference>
<dbReference type="SMART" id="SM01280">
    <property type="entry name" value="Mcm10"/>
    <property type="match status" value="1"/>
</dbReference>
<evidence type="ECO:0000250" key="1"/>
<evidence type="ECO:0000256" key="2">
    <source>
        <dbReference type="SAM" id="MobiDB-lite"/>
    </source>
</evidence>
<evidence type="ECO:0000269" key="3">
    <source>
    </source>
</evidence>
<evidence type="ECO:0000269" key="4">
    <source>
    </source>
</evidence>
<evidence type="ECO:0000305" key="5"/>
<proteinExistence type="evidence at protein level"/>